<evidence type="ECO:0000255" key="1">
    <source>
        <dbReference type="HAMAP-Rule" id="MF_00165"/>
    </source>
</evidence>
<reference key="1">
    <citation type="submission" date="2007-08" db="EMBL/GenBank/DDBJ databases">
        <authorList>
            <consortium name="The Vibrio harveyi Genome Sequencing Project"/>
            <person name="Bassler B."/>
            <person name="Clifton S.W."/>
            <person name="Fulton L."/>
            <person name="Delehaunty K."/>
            <person name="Fronick C."/>
            <person name="Harrison M."/>
            <person name="Markivic C."/>
            <person name="Fulton R."/>
            <person name="Tin-Wollam A.-M."/>
            <person name="Shah N."/>
            <person name="Pepin K."/>
            <person name="Nash W."/>
            <person name="Thiruvilangam P."/>
            <person name="Bhonagiri V."/>
            <person name="Waters C."/>
            <person name="Tu K.C."/>
            <person name="Irgon J."/>
            <person name="Wilson R.K."/>
        </authorList>
    </citation>
    <scope>NUCLEOTIDE SEQUENCE [LARGE SCALE GENOMIC DNA]</scope>
    <source>
        <strain>ATCC BAA-1116 / BB120</strain>
    </source>
</reference>
<keyword id="KW-0067">ATP-binding</keyword>
<keyword id="KW-0418">Kinase</keyword>
<keyword id="KW-0545">Nucleotide biosynthesis</keyword>
<keyword id="KW-0547">Nucleotide-binding</keyword>
<keyword id="KW-0808">Transferase</keyword>
<protein>
    <recommendedName>
        <fullName evidence="1">Thymidylate kinase</fullName>
        <ecNumber evidence="1">2.7.4.9</ecNumber>
    </recommendedName>
    <alternativeName>
        <fullName evidence="1">dTMP kinase</fullName>
    </alternativeName>
</protein>
<organism>
    <name type="scientific">Vibrio campbellii (strain ATCC BAA-1116)</name>
    <dbReference type="NCBI Taxonomy" id="2902295"/>
    <lineage>
        <taxon>Bacteria</taxon>
        <taxon>Pseudomonadati</taxon>
        <taxon>Pseudomonadota</taxon>
        <taxon>Gammaproteobacteria</taxon>
        <taxon>Vibrionales</taxon>
        <taxon>Vibrionaceae</taxon>
        <taxon>Vibrio</taxon>
    </lineage>
</organism>
<gene>
    <name evidence="1" type="primary">tmk</name>
    <name type="ordered locus">VIBHAR_02903</name>
</gene>
<name>KTHY_VIBC1</name>
<accession>A7MVG2</accession>
<proteinExistence type="inferred from homology"/>
<dbReference type="EC" id="2.7.4.9" evidence="1"/>
<dbReference type="EMBL" id="CP000789">
    <property type="protein sequence ID" value="ABU71856.1"/>
    <property type="molecule type" value="Genomic_DNA"/>
</dbReference>
<dbReference type="RefSeq" id="WP_012128452.1">
    <property type="nucleotide sequence ID" value="NC_022269.1"/>
</dbReference>
<dbReference type="SMR" id="A7MVG2"/>
<dbReference type="GeneID" id="67376781"/>
<dbReference type="KEGG" id="vha:VIBHAR_02903"/>
<dbReference type="PATRIC" id="fig|338187.36.peg.2830"/>
<dbReference type="Proteomes" id="UP000008152">
    <property type="component" value="Chromosome I"/>
</dbReference>
<dbReference type="GO" id="GO:0005829">
    <property type="term" value="C:cytosol"/>
    <property type="evidence" value="ECO:0007669"/>
    <property type="project" value="TreeGrafter"/>
</dbReference>
<dbReference type="GO" id="GO:0005524">
    <property type="term" value="F:ATP binding"/>
    <property type="evidence" value="ECO:0007669"/>
    <property type="project" value="UniProtKB-UniRule"/>
</dbReference>
<dbReference type="GO" id="GO:0004798">
    <property type="term" value="F:dTMP kinase activity"/>
    <property type="evidence" value="ECO:0007669"/>
    <property type="project" value="UniProtKB-UniRule"/>
</dbReference>
<dbReference type="GO" id="GO:0006233">
    <property type="term" value="P:dTDP biosynthetic process"/>
    <property type="evidence" value="ECO:0007669"/>
    <property type="project" value="InterPro"/>
</dbReference>
<dbReference type="GO" id="GO:0006235">
    <property type="term" value="P:dTTP biosynthetic process"/>
    <property type="evidence" value="ECO:0007669"/>
    <property type="project" value="UniProtKB-UniRule"/>
</dbReference>
<dbReference type="GO" id="GO:0006227">
    <property type="term" value="P:dUDP biosynthetic process"/>
    <property type="evidence" value="ECO:0007669"/>
    <property type="project" value="TreeGrafter"/>
</dbReference>
<dbReference type="CDD" id="cd01672">
    <property type="entry name" value="TMPK"/>
    <property type="match status" value="1"/>
</dbReference>
<dbReference type="FunFam" id="3.40.50.300:FF:000321">
    <property type="entry name" value="Thymidylate kinase"/>
    <property type="match status" value="1"/>
</dbReference>
<dbReference type="Gene3D" id="3.40.50.300">
    <property type="entry name" value="P-loop containing nucleotide triphosphate hydrolases"/>
    <property type="match status" value="1"/>
</dbReference>
<dbReference type="HAMAP" id="MF_00165">
    <property type="entry name" value="Thymidylate_kinase"/>
    <property type="match status" value="1"/>
</dbReference>
<dbReference type="InterPro" id="IPR027417">
    <property type="entry name" value="P-loop_NTPase"/>
</dbReference>
<dbReference type="InterPro" id="IPR039430">
    <property type="entry name" value="Thymidylate_kin-like_dom"/>
</dbReference>
<dbReference type="InterPro" id="IPR018095">
    <property type="entry name" value="Thymidylate_kin_CS"/>
</dbReference>
<dbReference type="InterPro" id="IPR018094">
    <property type="entry name" value="Thymidylate_kinase"/>
</dbReference>
<dbReference type="NCBIfam" id="TIGR00041">
    <property type="entry name" value="DTMP_kinase"/>
    <property type="match status" value="1"/>
</dbReference>
<dbReference type="PANTHER" id="PTHR10344">
    <property type="entry name" value="THYMIDYLATE KINASE"/>
    <property type="match status" value="1"/>
</dbReference>
<dbReference type="PANTHER" id="PTHR10344:SF4">
    <property type="entry name" value="UMP-CMP KINASE 2, MITOCHONDRIAL"/>
    <property type="match status" value="1"/>
</dbReference>
<dbReference type="Pfam" id="PF02223">
    <property type="entry name" value="Thymidylate_kin"/>
    <property type="match status" value="1"/>
</dbReference>
<dbReference type="SUPFAM" id="SSF52540">
    <property type="entry name" value="P-loop containing nucleoside triphosphate hydrolases"/>
    <property type="match status" value="1"/>
</dbReference>
<dbReference type="PROSITE" id="PS01331">
    <property type="entry name" value="THYMIDYLATE_KINASE"/>
    <property type="match status" value="1"/>
</dbReference>
<feature type="chain" id="PRO_1000023311" description="Thymidylate kinase">
    <location>
        <begin position="1"/>
        <end position="210"/>
    </location>
</feature>
<feature type="binding site" evidence="1">
    <location>
        <begin position="11"/>
        <end position="18"/>
    </location>
    <ligand>
        <name>ATP</name>
        <dbReference type="ChEBI" id="CHEBI:30616"/>
    </ligand>
</feature>
<comment type="function">
    <text evidence="1">Phosphorylation of dTMP to form dTDP in both de novo and salvage pathways of dTTP synthesis.</text>
</comment>
<comment type="catalytic activity">
    <reaction evidence="1">
        <text>dTMP + ATP = dTDP + ADP</text>
        <dbReference type="Rhea" id="RHEA:13517"/>
        <dbReference type="ChEBI" id="CHEBI:30616"/>
        <dbReference type="ChEBI" id="CHEBI:58369"/>
        <dbReference type="ChEBI" id="CHEBI:63528"/>
        <dbReference type="ChEBI" id="CHEBI:456216"/>
        <dbReference type="EC" id="2.7.4.9"/>
    </reaction>
</comment>
<comment type="similarity">
    <text evidence="1">Belongs to the thymidylate kinase family.</text>
</comment>
<sequence length="210" mass="23359">MMKANFIVVEGLEGAGKSTAIKTVLDTLKAAGIENIVNTREPGGTPLAEKMRGLVKEEHEGEDLKDMTELLLLYAARVQLVENVIKPALANDQWVVGDRHDLSSQAYQGGGRQIDASLMKNLRDTTLGEFKPAFTLYMDIDPRVGLERARGRGELDRIEKMDISFFERTRERYLELANADDSIVIINAEQSIEDVAQDIKAALNKWLAAQ</sequence>